<gene>
    <name type="primary">Cat</name>
    <name type="ORF">CG6871</name>
</gene>
<comment type="function">
    <text evidence="1">Catalyzes the degradation of hydrogen peroxide (H(2)O(2)) generated by peroxisomal oxidases to water and oxygen, thereby protecting cells from the toxic effects of hydrogen peroxide.</text>
</comment>
<comment type="catalytic activity">
    <reaction evidence="3">
        <text>2 H2O2 = O2 + 2 H2O</text>
        <dbReference type="Rhea" id="RHEA:20309"/>
        <dbReference type="ChEBI" id="CHEBI:15377"/>
        <dbReference type="ChEBI" id="CHEBI:15379"/>
        <dbReference type="ChEBI" id="CHEBI:16240"/>
        <dbReference type="EC" id="1.11.1.6"/>
    </reaction>
</comment>
<comment type="cofactor">
    <cofactor evidence="1">
        <name>heme</name>
        <dbReference type="ChEBI" id="CHEBI:30413"/>
    </cofactor>
</comment>
<comment type="subunit">
    <text>Homotetramer.</text>
</comment>
<comment type="subcellular location">
    <subcellularLocation>
        <location evidence="1">Peroxisome matrix</location>
    </subcellularLocation>
</comment>
<comment type="similarity">
    <text evidence="4">Belongs to the catalase family.</text>
</comment>
<accession>P17336</accession>
<accession>Q9VVT1</accession>
<reference key="1">
    <citation type="journal article" date="1996" name="Arch. Biochem. Biophys.">
        <title>Molecular analysis of the Drosophila catalase gene.</title>
        <authorList>
            <person name="Orr W.C."/>
            <person name="Orr E.C."/>
            <person name="Legan S.K."/>
            <person name="Sohal R.S."/>
        </authorList>
    </citation>
    <scope>NUCLEOTIDE SEQUENCE [GENOMIC DNA]</scope>
</reference>
<reference key="2">
    <citation type="journal article" date="1990" name="Nucleic Acids Res.">
        <title>cDNA and deduced amino acid sequence of Drosophila catalase.</title>
        <authorList>
            <person name="Orr E.C."/>
            <person name="Bewley G.C."/>
            <person name="Orr W.C."/>
        </authorList>
    </citation>
    <scope>NUCLEOTIDE SEQUENCE [MRNA]</scope>
</reference>
<reference key="3">
    <citation type="journal article" date="2000" name="Science">
        <title>The genome sequence of Drosophila melanogaster.</title>
        <authorList>
            <person name="Adams M.D."/>
            <person name="Celniker S.E."/>
            <person name="Holt R.A."/>
            <person name="Evans C.A."/>
            <person name="Gocayne J.D."/>
            <person name="Amanatides P.G."/>
            <person name="Scherer S.E."/>
            <person name="Li P.W."/>
            <person name="Hoskins R.A."/>
            <person name="Galle R.F."/>
            <person name="George R.A."/>
            <person name="Lewis S.E."/>
            <person name="Richards S."/>
            <person name="Ashburner M."/>
            <person name="Henderson S.N."/>
            <person name="Sutton G.G."/>
            <person name="Wortman J.R."/>
            <person name="Yandell M.D."/>
            <person name="Zhang Q."/>
            <person name="Chen L.X."/>
            <person name="Brandon R.C."/>
            <person name="Rogers Y.-H.C."/>
            <person name="Blazej R.G."/>
            <person name="Champe M."/>
            <person name="Pfeiffer B.D."/>
            <person name="Wan K.H."/>
            <person name="Doyle C."/>
            <person name="Baxter E.G."/>
            <person name="Helt G."/>
            <person name="Nelson C.R."/>
            <person name="Miklos G.L.G."/>
            <person name="Abril J.F."/>
            <person name="Agbayani A."/>
            <person name="An H.-J."/>
            <person name="Andrews-Pfannkoch C."/>
            <person name="Baldwin D."/>
            <person name="Ballew R.M."/>
            <person name="Basu A."/>
            <person name="Baxendale J."/>
            <person name="Bayraktaroglu L."/>
            <person name="Beasley E.M."/>
            <person name="Beeson K.Y."/>
            <person name="Benos P.V."/>
            <person name="Berman B.P."/>
            <person name="Bhandari D."/>
            <person name="Bolshakov S."/>
            <person name="Borkova D."/>
            <person name="Botchan M.R."/>
            <person name="Bouck J."/>
            <person name="Brokstein P."/>
            <person name="Brottier P."/>
            <person name="Burtis K.C."/>
            <person name="Busam D.A."/>
            <person name="Butler H."/>
            <person name="Cadieu E."/>
            <person name="Center A."/>
            <person name="Chandra I."/>
            <person name="Cherry J.M."/>
            <person name="Cawley S."/>
            <person name="Dahlke C."/>
            <person name="Davenport L.B."/>
            <person name="Davies P."/>
            <person name="de Pablos B."/>
            <person name="Delcher A."/>
            <person name="Deng Z."/>
            <person name="Mays A.D."/>
            <person name="Dew I."/>
            <person name="Dietz S.M."/>
            <person name="Dodson K."/>
            <person name="Doup L.E."/>
            <person name="Downes M."/>
            <person name="Dugan-Rocha S."/>
            <person name="Dunkov B.C."/>
            <person name="Dunn P."/>
            <person name="Durbin K.J."/>
            <person name="Evangelista C.C."/>
            <person name="Ferraz C."/>
            <person name="Ferriera S."/>
            <person name="Fleischmann W."/>
            <person name="Fosler C."/>
            <person name="Gabrielian A.E."/>
            <person name="Garg N.S."/>
            <person name="Gelbart W.M."/>
            <person name="Glasser K."/>
            <person name="Glodek A."/>
            <person name="Gong F."/>
            <person name="Gorrell J.H."/>
            <person name="Gu Z."/>
            <person name="Guan P."/>
            <person name="Harris M."/>
            <person name="Harris N.L."/>
            <person name="Harvey D.A."/>
            <person name="Heiman T.J."/>
            <person name="Hernandez J.R."/>
            <person name="Houck J."/>
            <person name="Hostin D."/>
            <person name="Houston K.A."/>
            <person name="Howland T.J."/>
            <person name="Wei M.-H."/>
            <person name="Ibegwam C."/>
            <person name="Jalali M."/>
            <person name="Kalush F."/>
            <person name="Karpen G.H."/>
            <person name="Ke Z."/>
            <person name="Kennison J.A."/>
            <person name="Ketchum K.A."/>
            <person name="Kimmel B.E."/>
            <person name="Kodira C.D."/>
            <person name="Kraft C.L."/>
            <person name="Kravitz S."/>
            <person name="Kulp D."/>
            <person name="Lai Z."/>
            <person name="Lasko P."/>
            <person name="Lei Y."/>
            <person name="Levitsky A.A."/>
            <person name="Li J.H."/>
            <person name="Li Z."/>
            <person name="Liang Y."/>
            <person name="Lin X."/>
            <person name="Liu X."/>
            <person name="Mattei B."/>
            <person name="McIntosh T.C."/>
            <person name="McLeod M.P."/>
            <person name="McPherson D."/>
            <person name="Merkulov G."/>
            <person name="Milshina N.V."/>
            <person name="Mobarry C."/>
            <person name="Morris J."/>
            <person name="Moshrefi A."/>
            <person name="Mount S.M."/>
            <person name="Moy M."/>
            <person name="Murphy B."/>
            <person name="Murphy L."/>
            <person name="Muzny D.M."/>
            <person name="Nelson D.L."/>
            <person name="Nelson D.R."/>
            <person name="Nelson K.A."/>
            <person name="Nixon K."/>
            <person name="Nusskern D.R."/>
            <person name="Pacleb J.M."/>
            <person name="Palazzolo M."/>
            <person name="Pittman G.S."/>
            <person name="Pan S."/>
            <person name="Pollard J."/>
            <person name="Puri V."/>
            <person name="Reese M.G."/>
            <person name="Reinert K."/>
            <person name="Remington K."/>
            <person name="Saunders R.D.C."/>
            <person name="Scheeler F."/>
            <person name="Shen H."/>
            <person name="Shue B.C."/>
            <person name="Siden-Kiamos I."/>
            <person name="Simpson M."/>
            <person name="Skupski M.P."/>
            <person name="Smith T.J."/>
            <person name="Spier E."/>
            <person name="Spradling A.C."/>
            <person name="Stapleton M."/>
            <person name="Strong R."/>
            <person name="Sun E."/>
            <person name="Svirskas R."/>
            <person name="Tector C."/>
            <person name="Turner R."/>
            <person name="Venter E."/>
            <person name="Wang A.H."/>
            <person name="Wang X."/>
            <person name="Wang Z.-Y."/>
            <person name="Wassarman D.A."/>
            <person name="Weinstock G.M."/>
            <person name="Weissenbach J."/>
            <person name="Williams S.M."/>
            <person name="Woodage T."/>
            <person name="Worley K.C."/>
            <person name="Wu D."/>
            <person name="Yang S."/>
            <person name="Yao Q.A."/>
            <person name="Ye J."/>
            <person name="Yeh R.-F."/>
            <person name="Zaveri J.S."/>
            <person name="Zhan M."/>
            <person name="Zhang G."/>
            <person name="Zhao Q."/>
            <person name="Zheng L."/>
            <person name="Zheng X.H."/>
            <person name="Zhong F.N."/>
            <person name="Zhong W."/>
            <person name="Zhou X."/>
            <person name="Zhu S.C."/>
            <person name="Zhu X."/>
            <person name="Smith H.O."/>
            <person name="Gibbs R.A."/>
            <person name="Myers E.W."/>
            <person name="Rubin G.M."/>
            <person name="Venter J.C."/>
        </authorList>
    </citation>
    <scope>NUCLEOTIDE SEQUENCE [LARGE SCALE GENOMIC DNA]</scope>
    <source>
        <strain>Berkeley</strain>
    </source>
</reference>
<reference key="4">
    <citation type="journal article" date="2002" name="Genome Biol.">
        <title>Annotation of the Drosophila melanogaster euchromatic genome: a systematic review.</title>
        <authorList>
            <person name="Misra S."/>
            <person name="Crosby M.A."/>
            <person name="Mungall C.J."/>
            <person name="Matthews B.B."/>
            <person name="Campbell K.S."/>
            <person name="Hradecky P."/>
            <person name="Huang Y."/>
            <person name="Kaminker J.S."/>
            <person name="Millburn G.H."/>
            <person name="Prochnik S.E."/>
            <person name="Smith C.D."/>
            <person name="Tupy J.L."/>
            <person name="Whitfield E.J."/>
            <person name="Bayraktaroglu L."/>
            <person name="Berman B.P."/>
            <person name="Bettencourt B.R."/>
            <person name="Celniker S.E."/>
            <person name="de Grey A.D.N.J."/>
            <person name="Drysdale R.A."/>
            <person name="Harris N.L."/>
            <person name="Richter J."/>
            <person name="Russo S."/>
            <person name="Schroeder A.J."/>
            <person name="Shu S.Q."/>
            <person name="Stapleton M."/>
            <person name="Yamada C."/>
            <person name="Ashburner M."/>
            <person name="Gelbart W.M."/>
            <person name="Rubin G.M."/>
            <person name="Lewis S.E."/>
        </authorList>
    </citation>
    <scope>GENOME REANNOTATION</scope>
    <source>
        <strain>Berkeley</strain>
    </source>
</reference>
<reference key="5">
    <citation type="journal article" date="2002" name="Genome Biol.">
        <title>A Drosophila full-length cDNA resource.</title>
        <authorList>
            <person name="Stapleton M."/>
            <person name="Carlson J.W."/>
            <person name="Brokstein P."/>
            <person name="Yu C."/>
            <person name="Champe M."/>
            <person name="George R.A."/>
            <person name="Guarin H."/>
            <person name="Kronmiller B."/>
            <person name="Pacleb J.M."/>
            <person name="Park S."/>
            <person name="Wan K.H."/>
            <person name="Rubin G.M."/>
            <person name="Celniker S.E."/>
        </authorList>
    </citation>
    <scope>NUCLEOTIDE SEQUENCE [LARGE SCALE MRNA]</scope>
    <source>
        <strain>Berkeley</strain>
        <tissue>Embryo</tissue>
    </source>
</reference>
<reference key="6">
    <citation type="journal article" date="1993" name="Exp. Cell Res.">
        <title>Identification of Drosophila wing imaginal disc proteins by two-dimensional gel analysis and microsequencing.</title>
        <authorList>
            <person name="Santaren J.F."/>
            <person name="van Damme J."/>
            <person name="Puype M."/>
            <person name="Vandekerckhove J."/>
            <person name="Garcia-Bellido A."/>
        </authorList>
    </citation>
    <scope>PROTEIN SEQUENCE OF 76-92</scope>
    <source>
        <strain>Vallecas</strain>
        <tissue>Wing imaginal disk</tissue>
    </source>
</reference>
<sequence>MAGRDAASNQLIDYKNSQTVSPGAITTGNGAPIGIKDASQTVGPRGPILLQDVNFLDEMSHFDRERIPERVVHAKGAGAFGYFEVTHDITQYCAAKIFDKVKKRTPLAVRFSTVGGESGSADTARDPRGFAVKFYTEDGVWDLVGNNTPVFFIRDPILFPSFIHTQKRNPQTHLKDPDMFWDFLTLRPESAHQVCILFSDRGTPDGYCHMNGYGSHTFKLINAKGEPIYAKFHFKTDQGIKNLDVKTADQLASTDPDYSIRDLYNRIKTCKFPSWTMYIQVMTYEQAKKFKYNPFDVTKVWSQKEYPLIPVGKMVLDRNPKNYFAEVEQIAFSPAHLVPGVEPSPDKMLHGRLFSYSDTHRHRLGPNYLQIPVNCPYKVKIENFQRDGAMNVTDNQDGAPNYFPNSFNGPQECPRARALSSCCPVTGDVYRYSSGDTEDNFGQVTDFWVHVLDKCAKKRLVQNIAGHLSNASQFLQERAVKNFTQVHADFGRMLTEELNLAKSSKF</sequence>
<proteinExistence type="evidence at protein level"/>
<evidence type="ECO:0000250" key="1">
    <source>
        <dbReference type="UniProtKB" id="P04040"/>
    </source>
</evidence>
<evidence type="ECO:0000255" key="2"/>
<evidence type="ECO:0000255" key="3">
    <source>
        <dbReference type="PROSITE-ProRule" id="PRU10013"/>
    </source>
</evidence>
<evidence type="ECO:0000305" key="4"/>
<keyword id="KW-0903">Direct protein sequencing</keyword>
<keyword id="KW-0349">Heme</keyword>
<keyword id="KW-0376">Hydrogen peroxide</keyword>
<keyword id="KW-0408">Iron</keyword>
<keyword id="KW-0479">Metal-binding</keyword>
<keyword id="KW-0560">Oxidoreductase</keyword>
<keyword id="KW-0575">Peroxidase</keyword>
<keyword id="KW-0576">Peroxisome</keyword>
<keyword id="KW-1185">Reference proteome</keyword>
<organism>
    <name type="scientific">Drosophila melanogaster</name>
    <name type="common">Fruit fly</name>
    <dbReference type="NCBI Taxonomy" id="7227"/>
    <lineage>
        <taxon>Eukaryota</taxon>
        <taxon>Metazoa</taxon>
        <taxon>Ecdysozoa</taxon>
        <taxon>Arthropoda</taxon>
        <taxon>Hexapoda</taxon>
        <taxon>Insecta</taxon>
        <taxon>Pterygota</taxon>
        <taxon>Neoptera</taxon>
        <taxon>Endopterygota</taxon>
        <taxon>Diptera</taxon>
        <taxon>Brachycera</taxon>
        <taxon>Muscomorpha</taxon>
        <taxon>Ephydroidea</taxon>
        <taxon>Drosophilidae</taxon>
        <taxon>Drosophila</taxon>
        <taxon>Sophophora</taxon>
    </lineage>
</organism>
<dbReference type="EC" id="1.11.1.6" evidence="3"/>
<dbReference type="EMBL" id="U00145">
    <property type="protein sequence ID" value="AAC13738.1"/>
    <property type="molecule type" value="Genomic_DNA"/>
</dbReference>
<dbReference type="EMBL" id="X52286">
    <property type="protein sequence ID" value="CAA36529.1"/>
    <property type="molecule type" value="mRNA"/>
</dbReference>
<dbReference type="EMBL" id="AE014296">
    <property type="protein sequence ID" value="AAF49228.1"/>
    <property type="molecule type" value="Genomic_DNA"/>
</dbReference>
<dbReference type="EMBL" id="AY084154">
    <property type="protein sequence ID" value="AAL89892.1"/>
    <property type="molecule type" value="mRNA"/>
</dbReference>
<dbReference type="PIR" id="S12725">
    <property type="entry name" value="CSFF"/>
</dbReference>
<dbReference type="RefSeq" id="NP_536731.1">
    <property type="nucleotide sequence ID" value="NM_080483.3"/>
</dbReference>
<dbReference type="SMR" id="P17336"/>
<dbReference type="BioGRID" id="65329">
    <property type="interactions" value="31"/>
</dbReference>
<dbReference type="DIP" id="DIP-18768N"/>
<dbReference type="FunCoup" id="P17336">
    <property type="interactions" value="1438"/>
</dbReference>
<dbReference type="IntAct" id="P17336">
    <property type="interactions" value="47"/>
</dbReference>
<dbReference type="STRING" id="7227.FBpp0074825"/>
<dbReference type="PeroxiBase" id="8425">
    <property type="entry name" value="DmKat01"/>
</dbReference>
<dbReference type="GlyGen" id="P17336">
    <property type="glycosylation" value="1 site, 1 O-linked glycan (1 site)"/>
</dbReference>
<dbReference type="PaxDb" id="7227-FBpp0074825"/>
<dbReference type="DNASU" id="40048"/>
<dbReference type="EnsemblMetazoa" id="FBtr0075058">
    <property type="protein sequence ID" value="FBpp0074825"/>
    <property type="gene ID" value="FBgn0000261"/>
</dbReference>
<dbReference type="GeneID" id="40048"/>
<dbReference type="KEGG" id="dme:Dmel_CG6871"/>
<dbReference type="AGR" id="FB:FBgn0000261"/>
<dbReference type="CTD" id="847"/>
<dbReference type="FlyBase" id="FBgn0000261">
    <property type="gene designation" value="Cat"/>
</dbReference>
<dbReference type="VEuPathDB" id="VectorBase:FBgn0000261"/>
<dbReference type="eggNOG" id="KOG0047">
    <property type="taxonomic scope" value="Eukaryota"/>
</dbReference>
<dbReference type="GeneTree" id="ENSGT00390000018100"/>
<dbReference type="HOGENOM" id="CLU_010645_2_0_1"/>
<dbReference type="InParanoid" id="P17336"/>
<dbReference type="OMA" id="KFRWNVF"/>
<dbReference type="OrthoDB" id="6880011at2759"/>
<dbReference type="PhylomeDB" id="P17336"/>
<dbReference type="Reactome" id="R-DME-3299685">
    <property type="pathway name" value="Detoxification of Reactive Oxygen Species"/>
</dbReference>
<dbReference type="Reactome" id="R-DME-6798695">
    <property type="pathway name" value="Neutrophil degranulation"/>
</dbReference>
<dbReference type="Reactome" id="R-DME-9033241">
    <property type="pathway name" value="Peroxisomal protein import"/>
</dbReference>
<dbReference type="SignaLink" id="P17336"/>
<dbReference type="BioGRID-ORCS" id="40048">
    <property type="hits" value="0 hits in 3 CRISPR screens"/>
</dbReference>
<dbReference type="ChiTaRS" id="Cat">
    <property type="organism name" value="fly"/>
</dbReference>
<dbReference type="GenomeRNAi" id="40048"/>
<dbReference type="PRO" id="PR:P17336"/>
<dbReference type="Proteomes" id="UP000000803">
    <property type="component" value="Chromosome 3L"/>
</dbReference>
<dbReference type="Bgee" id="FBgn0000261">
    <property type="expression patterns" value="Expressed in adult oenocyte (Drosophila) in dorsal vessel heart and 231 other cell types or tissues"/>
</dbReference>
<dbReference type="GO" id="GO:0005737">
    <property type="term" value="C:cytoplasm"/>
    <property type="evidence" value="ECO:0000318"/>
    <property type="project" value="GO_Central"/>
</dbReference>
<dbReference type="GO" id="GO:0005829">
    <property type="term" value="C:cytosol"/>
    <property type="evidence" value="ECO:0000314"/>
    <property type="project" value="FlyBase"/>
</dbReference>
<dbReference type="GO" id="GO:0016008">
    <property type="term" value="C:major mitochondrial derivative"/>
    <property type="evidence" value="ECO:0000314"/>
    <property type="project" value="FlyBase"/>
</dbReference>
<dbReference type="GO" id="GO:0005782">
    <property type="term" value="C:peroxisomal matrix"/>
    <property type="evidence" value="ECO:0007669"/>
    <property type="project" value="UniProtKB-SubCell"/>
</dbReference>
<dbReference type="GO" id="GO:0005777">
    <property type="term" value="C:peroxisome"/>
    <property type="evidence" value="ECO:0000255"/>
    <property type="project" value="FlyBase"/>
</dbReference>
<dbReference type="GO" id="GO:0004096">
    <property type="term" value="F:catalase activity"/>
    <property type="evidence" value="ECO:0000314"/>
    <property type="project" value="FlyBase"/>
</dbReference>
<dbReference type="GO" id="GO:0020037">
    <property type="term" value="F:heme binding"/>
    <property type="evidence" value="ECO:0000318"/>
    <property type="project" value="GO_Central"/>
</dbReference>
<dbReference type="GO" id="GO:0046872">
    <property type="term" value="F:metal ion binding"/>
    <property type="evidence" value="ECO:0007669"/>
    <property type="project" value="UniProtKB-KW"/>
</dbReference>
<dbReference type="GO" id="GO:0008340">
    <property type="term" value="P:determination of adult lifespan"/>
    <property type="evidence" value="ECO:0000304"/>
    <property type="project" value="FlyBase"/>
</dbReference>
<dbReference type="GO" id="GO:0003007">
    <property type="term" value="P:heart morphogenesis"/>
    <property type="evidence" value="ECO:0000315"/>
    <property type="project" value="FlyBase"/>
</dbReference>
<dbReference type="GO" id="GO:0042744">
    <property type="term" value="P:hydrogen peroxide catabolic process"/>
    <property type="evidence" value="ECO:0000316"/>
    <property type="project" value="FlyBase"/>
</dbReference>
<dbReference type="GO" id="GO:0036335">
    <property type="term" value="P:intestinal stem cell homeostasis"/>
    <property type="evidence" value="ECO:0000315"/>
    <property type="project" value="FlyBase"/>
</dbReference>
<dbReference type="GO" id="GO:0038001">
    <property type="term" value="P:paracrine signaling"/>
    <property type="evidence" value="ECO:0000315"/>
    <property type="project" value="FlyBase"/>
</dbReference>
<dbReference type="GO" id="GO:0072593">
    <property type="term" value="P:reactive oxygen species metabolic process"/>
    <property type="evidence" value="ECO:0000315"/>
    <property type="project" value="FlyBase"/>
</dbReference>
<dbReference type="GO" id="GO:0035206">
    <property type="term" value="P:regulation of hemocyte proliferation"/>
    <property type="evidence" value="ECO:0000315"/>
    <property type="project" value="FlyBase"/>
</dbReference>
<dbReference type="GO" id="GO:0048167">
    <property type="term" value="P:regulation of synaptic plasticity"/>
    <property type="evidence" value="ECO:0000315"/>
    <property type="project" value="UniProtKB"/>
</dbReference>
<dbReference type="GO" id="GO:0034976">
    <property type="term" value="P:response to endoplasmic reticulum stress"/>
    <property type="evidence" value="ECO:0000315"/>
    <property type="project" value="FlyBase"/>
</dbReference>
<dbReference type="GO" id="GO:0042542">
    <property type="term" value="P:response to hydrogen peroxide"/>
    <property type="evidence" value="ECO:0000315"/>
    <property type="project" value="FlyBase"/>
</dbReference>
<dbReference type="CDD" id="cd08156">
    <property type="entry name" value="catalase_clade_3"/>
    <property type="match status" value="1"/>
</dbReference>
<dbReference type="FunFam" id="2.40.180.10:FF:000001">
    <property type="entry name" value="Catalase"/>
    <property type="match status" value="1"/>
</dbReference>
<dbReference type="Gene3D" id="2.40.180.10">
    <property type="entry name" value="Catalase core domain"/>
    <property type="match status" value="1"/>
</dbReference>
<dbReference type="InterPro" id="IPR018028">
    <property type="entry name" value="Catalase"/>
</dbReference>
<dbReference type="InterPro" id="IPR040333">
    <property type="entry name" value="Catalase_3"/>
</dbReference>
<dbReference type="InterPro" id="IPR024708">
    <property type="entry name" value="Catalase_AS"/>
</dbReference>
<dbReference type="InterPro" id="IPR024711">
    <property type="entry name" value="Catalase_clade1/3"/>
</dbReference>
<dbReference type="InterPro" id="IPR011614">
    <property type="entry name" value="Catalase_core"/>
</dbReference>
<dbReference type="InterPro" id="IPR002226">
    <property type="entry name" value="Catalase_haem_BS"/>
</dbReference>
<dbReference type="InterPro" id="IPR010582">
    <property type="entry name" value="Catalase_immune_responsive"/>
</dbReference>
<dbReference type="InterPro" id="IPR020835">
    <property type="entry name" value="Catalase_sf"/>
</dbReference>
<dbReference type="PANTHER" id="PTHR11465">
    <property type="entry name" value="CATALASE"/>
    <property type="match status" value="1"/>
</dbReference>
<dbReference type="PANTHER" id="PTHR11465:SF9">
    <property type="entry name" value="CATALASE"/>
    <property type="match status" value="1"/>
</dbReference>
<dbReference type="Pfam" id="PF00199">
    <property type="entry name" value="Catalase"/>
    <property type="match status" value="1"/>
</dbReference>
<dbReference type="Pfam" id="PF06628">
    <property type="entry name" value="Catalase-rel"/>
    <property type="match status" value="1"/>
</dbReference>
<dbReference type="PIRSF" id="PIRSF038928">
    <property type="entry name" value="Catalase_clade1-3"/>
    <property type="match status" value="1"/>
</dbReference>
<dbReference type="PRINTS" id="PR00067">
    <property type="entry name" value="CATALASE"/>
</dbReference>
<dbReference type="SMART" id="SM01060">
    <property type="entry name" value="Catalase"/>
    <property type="match status" value="1"/>
</dbReference>
<dbReference type="SUPFAM" id="SSF56634">
    <property type="entry name" value="Heme-dependent catalase-like"/>
    <property type="match status" value="1"/>
</dbReference>
<dbReference type="PROSITE" id="PS00437">
    <property type="entry name" value="CATALASE_1"/>
    <property type="match status" value="1"/>
</dbReference>
<dbReference type="PROSITE" id="PS00438">
    <property type="entry name" value="CATALASE_2"/>
    <property type="match status" value="1"/>
</dbReference>
<dbReference type="PROSITE" id="PS51402">
    <property type="entry name" value="CATALASE_3"/>
    <property type="match status" value="1"/>
</dbReference>
<name>CATA_DROME</name>
<protein>
    <recommendedName>
        <fullName>Catalase</fullName>
        <ecNumber evidence="3">1.11.1.6</ecNumber>
    </recommendedName>
</protein>
<feature type="chain" id="PRO_0000084912" description="Catalase">
    <location>
        <begin position="1"/>
        <end position="506"/>
    </location>
</feature>
<feature type="short sequence motif" description="Microbody targeting signal" evidence="2">
    <location>
        <begin position="504"/>
        <end position="506"/>
    </location>
</feature>
<feature type="active site" evidence="3">
    <location>
        <position position="73"/>
    </location>
</feature>
<feature type="active site" evidence="3">
    <location>
        <position position="146"/>
    </location>
</feature>
<feature type="binding site" description="axial binding residue" evidence="1">
    <location>
        <position position="356"/>
    </location>
    <ligand>
        <name>heme</name>
        <dbReference type="ChEBI" id="CHEBI:30413"/>
    </ligand>
    <ligandPart>
        <name>Fe</name>
        <dbReference type="ChEBI" id="CHEBI:18248"/>
    </ligandPart>
</feature>